<name>HISX_PSEAE</name>
<feature type="chain" id="PRO_0000135819" description="Histidinol dehydrogenase">
    <location>
        <begin position="1"/>
        <end position="440"/>
    </location>
</feature>
<feature type="active site" description="Proton acceptor" evidence="1">
    <location>
        <position position="333"/>
    </location>
</feature>
<feature type="active site" description="Proton acceptor" evidence="1">
    <location>
        <position position="334"/>
    </location>
</feature>
<feature type="binding site" evidence="1">
    <location>
        <position position="136"/>
    </location>
    <ligand>
        <name>NAD(+)</name>
        <dbReference type="ChEBI" id="CHEBI:57540"/>
    </ligand>
</feature>
<feature type="binding site" evidence="1">
    <location>
        <position position="197"/>
    </location>
    <ligand>
        <name>NAD(+)</name>
        <dbReference type="ChEBI" id="CHEBI:57540"/>
    </ligand>
</feature>
<feature type="binding site" evidence="1">
    <location>
        <position position="220"/>
    </location>
    <ligand>
        <name>NAD(+)</name>
        <dbReference type="ChEBI" id="CHEBI:57540"/>
    </ligand>
</feature>
<feature type="binding site" evidence="1">
    <location>
        <position position="243"/>
    </location>
    <ligand>
        <name>substrate</name>
    </ligand>
</feature>
<feature type="binding site" evidence="1">
    <location>
        <position position="265"/>
    </location>
    <ligand>
        <name>substrate</name>
    </ligand>
</feature>
<feature type="binding site" evidence="1">
    <location>
        <position position="265"/>
    </location>
    <ligand>
        <name>Zn(2+)</name>
        <dbReference type="ChEBI" id="CHEBI:29105"/>
    </ligand>
</feature>
<feature type="binding site" evidence="1">
    <location>
        <position position="268"/>
    </location>
    <ligand>
        <name>substrate</name>
    </ligand>
</feature>
<feature type="binding site" evidence="1">
    <location>
        <position position="268"/>
    </location>
    <ligand>
        <name>Zn(2+)</name>
        <dbReference type="ChEBI" id="CHEBI:29105"/>
    </ligand>
</feature>
<feature type="binding site" evidence="1">
    <location>
        <position position="334"/>
    </location>
    <ligand>
        <name>substrate</name>
    </ligand>
</feature>
<feature type="binding site" evidence="1">
    <location>
        <position position="367"/>
    </location>
    <ligand>
        <name>substrate</name>
    </ligand>
</feature>
<feature type="binding site" evidence="1">
    <location>
        <position position="367"/>
    </location>
    <ligand>
        <name>Zn(2+)</name>
        <dbReference type="ChEBI" id="CHEBI:29105"/>
    </ligand>
</feature>
<feature type="binding site" evidence="1">
    <location>
        <position position="421"/>
    </location>
    <ligand>
        <name>substrate</name>
    </ligand>
</feature>
<feature type="binding site" evidence="1">
    <location>
        <position position="426"/>
    </location>
    <ligand>
        <name>substrate</name>
    </ligand>
</feature>
<feature type="binding site" evidence="1">
    <location>
        <position position="426"/>
    </location>
    <ligand>
        <name>Zn(2+)</name>
        <dbReference type="ChEBI" id="CHEBI:29105"/>
    </ligand>
</feature>
<evidence type="ECO:0000255" key="1">
    <source>
        <dbReference type="HAMAP-Rule" id="MF_01024"/>
    </source>
</evidence>
<comment type="function">
    <text evidence="1">Catalyzes the sequential NAD-dependent oxidations of L-histidinol to L-histidinaldehyde and then to L-histidine.</text>
</comment>
<comment type="catalytic activity">
    <reaction evidence="1">
        <text>L-histidinol + 2 NAD(+) + H2O = L-histidine + 2 NADH + 3 H(+)</text>
        <dbReference type="Rhea" id="RHEA:20641"/>
        <dbReference type="ChEBI" id="CHEBI:15377"/>
        <dbReference type="ChEBI" id="CHEBI:15378"/>
        <dbReference type="ChEBI" id="CHEBI:57540"/>
        <dbReference type="ChEBI" id="CHEBI:57595"/>
        <dbReference type="ChEBI" id="CHEBI:57699"/>
        <dbReference type="ChEBI" id="CHEBI:57945"/>
        <dbReference type="EC" id="1.1.1.23"/>
    </reaction>
</comment>
<comment type="cofactor">
    <cofactor evidence="1">
        <name>Zn(2+)</name>
        <dbReference type="ChEBI" id="CHEBI:29105"/>
    </cofactor>
    <text evidence="1">Binds 1 zinc ion per subunit.</text>
</comment>
<comment type="pathway">
    <text evidence="1">Amino-acid biosynthesis; L-histidine biosynthesis; L-histidine from 5-phospho-alpha-D-ribose 1-diphosphate: step 9/9.</text>
</comment>
<comment type="similarity">
    <text evidence="1">Belongs to the histidinol dehydrogenase family.</text>
</comment>
<proteinExistence type="evidence at protein level"/>
<organism>
    <name type="scientific">Pseudomonas aeruginosa (strain ATCC 15692 / DSM 22644 / CIP 104116 / JCM 14847 / LMG 12228 / 1C / PRS 101 / PAO1)</name>
    <dbReference type="NCBI Taxonomy" id="208964"/>
    <lineage>
        <taxon>Bacteria</taxon>
        <taxon>Pseudomonadati</taxon>
        <taxon>Pseudomonadota</taxon>
        <taxon>Gammaproteobacteria</taxon>
        <taxon>Pseudomonadales</taxon>
        <taxon>Pseudomonadaceae</taxon>
        <taxon>Pseudomonas</taxon>
    </lineage>
</organism>
<sequence>MTAPFAIRRLNAADPDFGRHLDHLLSWESVSDDSVNQRVLDIIAAVRSRGDAAVVEFTQRFDGLQAASMADLILPRERLELALTRITVAQREALEVAAERVRSYHEKQKQGSWRYTEADGTVLGQQVTPLDRAGLYVPGGKASYPSSVLMNAIPAKVAGVSEVVMVVPTPRGEINEIVLAAACIAGVDRVFTIGGAQAVAALAYGTESVPRVDKIVGPGNIYVATAKRHVFGQVGIDMIAGPSEILVVCDGQTDPDWIAMDLFSQAEHDEDAQSILVSPDAAFLDRVADSIARLLPTMERAEIIRTSLEGRGALIQVADQAQACAVANRIAPEHLELSVADPESWLPEIRHAGAIFMGRYTAEALGDYCAGPNHVLPTSGTARFSSPLGVYDFQKRSSIINCSAEGASVLGRTASVLARGESLTAHARSAEYRILDEKEA</sequence>
<keyword id="KW-0002">3D-structure</keyword>
<keyword id="KW-0028">Amino-acid biosynthesis</keyword>
<keyword id="KW-0368">Histidine biosynthesis</keyword>
<keyword id="KW-0479">Metal-binding</keyword>
<keyword id="KW-0520">NAD</keyword>
<keyword id="KW-0560">Oxidoreductase</keyword>
<keyword id="KW-1185">Reference proteome</keyword>
<keyword id="KW-0862">Zinc</keyword>
<accession>Q9HVW9</accession>
<protein>
    <recommendedName>
        <fullName evidence="1">Histidinol dehydrogenase</fullName>
        <shortName evidence="1">HDH</shortName>
        <ecNumber evidence="1">1.1.1.23</ecNumber>
    </recommendedName>
</protein>
<reference key="1">
    <citation type="journal article" date="2000" name="Nature">
        <title>Complete genome sequence of Pseudomonas aeruginosa PAO1, an opportunistic pathogen.</title>
        <authorList>
            <person name="Stover C.K."/>
            <person name="Pham X.-Q.T."/>
            <person name="Erwin A.L."/>
            <person name="Mizoguchi S.D."/>
            <person name="Warrener P."/>
            <person name="Hickey M.J."/>
            <person name="Brinkman F.S.L."/>
            <person name="Hufnagle W.O."/>
            <person name="Kowalik D.J."/>
            <person name="Lagrou M."/>
            <person name="Garber R.L."/>
            <person name="Goltry L."/>
            <person name="Tolentino E."/>
            <person name="Westbrock-Wadman S."/>
            <person name="Yuan Y."/>
            <person name="Brody L.L."/>
            <person name="Coulter S.N."/>
            <person name="Folger K.R."/>
            <person name="Kas A."/>
            <person name="Larbig K."/>
            <person name="Lim R.M."/>
            <person name="Smith K.A."/>
            <person name="Spencer D.H."/>
            <person name="Wong G.K.-S."/>
            <person name="Wu Z."/>
            <person name="Paulsen I.T."/>
            <person name="Reizer J."/>
            <person name="Saier M.H. Jr."/>
            <person name="Hancock R.E.W."/>
            <person name="Lory S."/>
            <person name="Olson M.V."/>
        </authorList>
    </citation>
    <scope>NUCLEOTIDE SEQUENCE [LARGE SCALE GENOMIC DNA]</scope>
    <source>
        <strain>ATCC 15692 / DSM 22644 / CIP 104116 / JCM 14847 / LMG 12228 / 1C / PRS 101 / PAO1</strain>
    </source>
</reference>
<gene>
    <name evidence="1" type="primary">hisD</name>
    <name type="ordered locus">PA4448</name>
</gene>
<dbReference type="EC" id="1.1.1.23" evidence="1"/>
<dbReference type="EMBL" id="AE004091">
    <property type="protein sequence ID" value="AAG07836.1"/>
    <property type="molecule type" value="Genomic_DNA"/>
</dbReference>
<dbReference type="PIR" id="D83089">
    <property type="entry name" value="D83089"/>
</dbReference>
<dbReference type="RefSeq" id="NP_253138.1">
    <property type="nucleotide sequence ID" value="NC_002516.2"/>
</dbReference>
<dbReference type="RefSeq" id="WP_003094326.1">
    <property type="nucleotide sequence ID" value="NZ_QZGE01000004.1"/>
</dbReference>
<dbReference type="PDB" id="8XSQ">
    <property type="method" value="X-ray"/>
    <property type="resolution" value="1.75 A"/>
    <property type="chains" value="A/B=1-440"/>
</dbReference>
<dbReference type="PDBsum" id="8XSQ"/>
<dbReference type="SMR" id="Q9HVW9"/>
<dbReference type="FunCoup" id="Q9HVW9">
    <property type="interactions" value="714"/>
</dbReference>
<dbReference type="STRING" id="208964.PA4448"/>
<dbReference type="PaxDb" id="208964-PA4448"/>
<dbReference type="GeneID" id="880992"/>
<dbReference type="KEGG" id="pae:PA4448"/>
<dbReference type="PATRIC" id="fig|208964.12.peg.4657"/>
<dbReference type="PseudoCAP" id="PA4448"/>
<dbReference type="HOGENOM" id="CLU_006732_3_3_6"/>
<dbReference type="InParanoid" id="Q9HVW9"/>
<dbReference type="OrthoDB" id="9805269at2"/>
<dbReference type="PhylomeDB" id="Q9HVW9"/>
<dbReference type="BioCyc" id="PAER208964:G1FZ6-4536-MONOMER"/>
<dbReference type="UniPathway" id="UPA00031">
    <property type="reaction ID" value="UER00014"/>
</dbReference>
<dbReference type="Proteomes" id="UP000002438">
    <property type="component" value="Chromosome"/>
</dbReference>
<dbReference type="GO" id="GO:0005737">
    <property type="term" value="C:cytoplasm"/>
    <property type="evidence" value="ECO:0000318"/>
    <property type="project" value="GO_Central"/>
</dbReference>
<dbReference type="GO" id="GO:0005829">
    <property type="term" value="C:cytosol"/>
    <property type="evidence" value="ECO:0000318"/>
    <property type="project" value="GO_Central"/>
</dbReference>
<dbReference type="GO" id="GO:0004399">
    <property type="term" value="F:histidinol dehydrogenase activity"/>
    <property type="evidence" value="ECO:0000318"/>
    <property type="project" value="GO_Central"/>
</dbReference>
<dbReference type="GO" id="GO:0051287">
    <property type="term" value="F:NAD binding"/>
    <property type="evidence" value="ECO:0007669"/>
    <property type="project" value="InterPro"/>
</dbReference>
<dbReference type="GO" id="GO:0008270">
    <property type="term" value="F:zinc ion binding"/>
    <property type="evidence" value="ECO:0007669"/>
    <property type="project" value="UniProtKB-UniRule"/>
</dbReference>
<dbReference type="GO" id="GO:0000105">
    <property type="term" value="P:L-histidine biosynthetic process"/>
    <property type="evidence" value="ECO:0000318"/>
    <property type="project" value="GO_Central"/>
</dbReference>
<dbReference type="CDD" id="cd06572">
    <property type="entry name" value="Histidinol_dh"/>
    <property type="match status" value="1"/>
</dbReference>
<dbReference type="FunFam" id="3.40.50.1980:FF:000004">
    <property type="entry name" value="Histidinol dehydrogenase"/>
    <property type="match status" value="1"/>
</dbReference>
<dbReference type="FunFam" id="3.40.50.1980:FF:000010">
    <property type="entry name" value="Histidinol dehydrogenase"/>
    <property type="match status" value="1"/>
</dbReference>
<dbReference type="FunFam" id="1.20.5.1300:FF:000002">
    <property type="entry name" value="Histidinol dehydrogenase, chloroplastic"/>
    <property type="match status" value="1"/>
</dbReference>
<dbReference type="Gene3D" id="1.20.5.1300">
    <property type="match status" value="1"/>
</dbReference>
<dbReference type="Gene3D" id="3.40.50.1980">
    <property type="entry name" value="Nitrogenase molybdenum iron protein domain"/>
    <property type="match status" value="2"/>
</dbReference>
<dbReference type="HAMAP" id="MF_01024">
    <property type="entry name" value="HisD"/>
    <property type="match status" value="1"/>
</dbReference>
<dbReference type="InterPro" id="IPR016161">
    <property type="entry name" value="Ald_DH/histidinol_DH"/>
</dbReference>
<dbReference type="InterPro" id="IPR001692">
    <property type="entry name" value="Histidinol_DH_CS"/>
</dbReference>
<dbReference type="InterPro" id="IPR022695">
    <property type="entry name" value="Histidinol_DH_monofunct"/>
</dbReference>
<dbReference type="InterPro" id="IPR012131">
    <property type="entry name" value="Hstdl_DH"/>
</dbReference>
<dbReference type="NCBIfam" id="TIGR00069">
    <property type="entry name" value="hisD"/>
    <property type="match status" value="1"/>
</dbReference>
<dbReference type="PANTHER" id="PTHR21256:SF2">
    <property type="entry name" value="HISTIDINE BIOSYNTHESIS TRIFUNCTIONAL PROTEIN"/>
    <property type="match status" value="1"/>
</dbReference>
<dbReference type="PANTHER" id="PTHR21256">
    <property type="entry name" value="HISTIDINOL DEHYDROGENASE HDH"/>
    <property type="match status" value="1"/>
</dbReference>
<dbReference type="Pfam" id="PF00815">
    <property type="entry name" value="Histidinol_dh"/>
    <property type="match status" value="1"/>
</dbReference>
<dbReference type="PIRSF" id="PIRSF000099">
    <property type="entry name" value="Histidinol_dh"/>
    <property type="match status" value="1"/>
</dbReference>
<dbReference type="PRINTS" id="PR00083">
    <property type="entry name" value="HOLDHDRGNASE"/>
</dbReference>
<dbReference type="SUPFAM" id="SSF53720">
    <property type="entry name" value="ALDH-like"/>
    <property type="match status" value="1"/>
</dbReference>
<dbReference type="PROSITE" id="PS00611">
    <property type="entry name" value="HISOL_DEHYDROGENASE"/>
    <property type="match status" value="1"/>
</dbReference>